<comment type="subcellular location">
    <subcellularLocation>
        <location evidence="1">Cytoplasm</location>
    </subcellularLocation>
    <subcellularLocation>
        <location evidence="1">Cell projection</location>
    </subcellularLocation>
    <text evidence="1">Concentrates at cytoplasmic punctate structures and localizes at the mating projection tip.</text>
</comment>
<comment type="similarity">
    <text evidence="2">Belongs to the TDA2 family.</text>
</comment>
<sequence>MSMQIEIKDGRSDNSPLPERKLVTLIQESYDSLKDDNEINLSTESTSNLLIKLVLEKLEKHSSLYKYIASVTTLNIEGLNEENANFSLKNDIGASWESKKDGIFNYKLEDKNSNECYLITILWLHK</sequence>
<feature type="initiator methionine" description="Removed" evidence="1">
    <location>
        <position position="1"/>
    </location>
</feature>
<feature type="chain" id="PRO_0000410736" description="Topoisomerase I damage affected protein 2">
    <location>
        <begin position="2"/>
        <end position="126"/>
    </location>
</feature>
<feature type="modified residue" description="N-acetylserine" evidence="1">
    <location>
        <position position="2"/>
    </location>
</feature>
<name>TDA2_YEAS7</name>
<keyword id="KW-0007">Acetylation</keyword>
<keyword id="KW-0966">Cell projection</keyword>
<keyword id="KW-0963">Cytoplasm</keyword>
<proteinExistence type="inferred from homology"/>
<gene>
    <name type="primary">TDA2</name>
    <name type="ORF">SCY_1572</name>
</gene>
<accession>A6ZR25</accession>
<reference key="1">
    <citation type="journal article" date="2007" name="Proc. Natl. Acad. Sci. U.S.A.">
        <title>Genome sequencing and comparative analysis of Saccharomyces cerevisiae strain YJM789.</title>
        <authorList>
            <person name="Wei W."/>
            <person name="McCusker J.H."/>
            <person name="Hyman R.W."/>
            <person name="Jones T."/>
            <person name="Ning Y."/>
            <person name="Cao Z."/>
            <person name="Gu Z."/>
            <person name="Bruno D."/>
            <person name="Miranda M."/>
            <person name="Nguyen M."/>
            <person name="Wilhelmy J."/>
            <person name="Komp C."/>
            <person name="Tamse R."/>
            <person name="Wang X."/>
            <person name="Jia P."/>
            <person name="Luedi P."/>
            <person name="Oefner P.J."/>
            <person name="David L."/>
            <person name="Dietrich F.S."/>
            <person name="Li Y."/>
            <person name="Davis R.W."/>
            <person name="Steinmetz L.M."/>
        </authorList>
    </citation>
    <scope>NUCLEOTIDE SEQUENCE [LARGE SCALE GENOMIC DNA]</scope>
    <source>
        <strain>YJM789</strain>
    </source>
</reference>
<organism>
    <name type="scientific">Saccharomyces cerevisiae (strain YJM789)</name>
    <name type="common">Baker's yeast</name>
    <dbReference type="NCBI Taxonomy" id="307796"/>
    <lineage>
        <taxon>Eukaryota</taxon>
        <taxon>Fungi</taxon>
        <taxon>Dikarya</taxon>
        <taxon>Ascomycota</taxon>
        <taxon>Saccharomycotina</taxon>
        <taxon>Saccharomycetes</taxon>
        <taxon>Saccharomycetales</taxon>
        <taxon>Saccharomycetaceae</taxon>
        <taxon>Saccharomyces</taxon>
    </lineage>
</organism>
<evidence type="ECO:0000250" key="1">
    <source>
        <dbReference type="UniProtKB" id="P40045"/>
    </source>
</evidence>
<evidence type="ECO:0000305" key="2"/>
<dbReference type="EMBL" id="AAFW02000048">
    <property type="protein sequence ID" value="EDN63045.1"/>
    <property type="molecule type" value="Genomic_DNA"/>
</dbReference>
<dbReference type="SMR" id="A6ZR25"/>
<dbReference type="HOGENOM" id="CLU_137494_1_0_1"/>
<dbReference type="Proteomes" id="UP000007060">
    <property type="component" value="Unassembled WGS sequence"/>
</dbReference>
<dbReference type="GO" id="GO:0042995">
    <property type="term" value="C:cell projection"/>
    <property type="evidence" value="ECO:0007669"/>
    <property type="project" value="UniProtKB-SubCell"/>
</dbReference>
<dbReference type="GO" id="GO:0005737">
    <property type="term" value="C:cytoplasm"/>
    <property type="evidence" value="ECO:0007669"/>
    <property type="project" value="UniProtKB-SubCell"/>
</dbReference>
<dbReference type="CDD" id="cd21457">
    <property type="entry name" value="DLC-like_TDA2"/>
    <property type="match status" value="1"/>
</dbReference>
<dbReference type="FunFam" id="3.30.1140.40:FF:000005">
    <property type="entry name" value="Topoisomerase I damage affected protein 2"/>
    <property type="match status" value="1"/>
</dbReference>
<dbReference type="Gene3D" id="3.30.1140.40">
    <property type="entry name" value="Tctex-1"/>
    <property type="match status" value="1"/>
</dbReference>
<dbReference type="InterPro" id="IPR038586">
    <property type="entry name" value="Tctex-1-like_sf"/>
</dbReference>
<protein>
    <recommendedName>
        <fullName>Topoisomerase I damage affected protein 2</fullName>
    </recommendedName>
</protein>